<gene>
    <name evidence="1" type="primary">gpmA</name>
    <name type="ordered locus">BAV0243</name>
</gene>
<accession>Q2L0A6</accession>
<sequence>MYKLVLMRHGESQWNLENRFTGWTDVDLTEVGREQARRAGELLKREGYTFDLAYASVLKRAIRTLWIALDAMDAMYTPVGLNWRLNERHYGQLQGLNKAETAAKYGDEQVLIWRRAYAIAPEPLDIDDPRHPRFDSRYAKIPAEQLPATECLRDTVARVLPFWNESIAPAIRAGRRVLVAAHGNSLRALIKHLDNISDDAIVELNIPTGQPLVYELDENLRPIRHYYLGDAAEIEAAMAAVAAQGKAKKD</sequence>
<reference key="1">
    <citation type="journal article" date="2006" name="J. Bacteriol.">
        <title>Comparison of the genome sequence of the poultry pathogen Bordetella avium with those of B. bronchiseptica, B. pertussis, and B. parapertussis reveals extensive diversity in surface structures associated with host interaction.</title>
        <authorList>
            <person name="Sebaihia M."/>
            <person name="Preston A."/>
            <person name="Maskell D.J."/>
            <person name="Kuzmiak H."/>
            <person name="Connell T.D."/>
            <person name="King N.D."/>
            <person name="Orndorff P.E."/>
            <person name="Miyamoto D.M."/>
            <person name="Thomson N.R."/>
            <person name="Harris D."/>
            <person name="Goble A."/>
            <person name="Lord A."/>
            <person name="Murphy L."/>
            <person name="Quail M.A."/>
            <person name="Rutter S."/>
            <person name="Squares R."/>
            <person name="Squares S."/>
            <person name="Woodward J."/>
            <person name="Parkhill J."/>
            <person name="Temple L.M."/>
        </authorList>
    </citation>
    <scope>NUCLEOTIDE SEQUENCE [LARGE SCALE GENOMIC DNA]</scope>
    <source>
        <strain>197N</strain>
    </source>
</reference>
<feature type="chain" id="PRO_1000064032" description="2,3-bisphosphoglycerate-dependent phosphoglycerate mutase">
    <location>
        <begin position="1"/>
        <end position="250"/>
    </location>
</feature>
<feature type="active site" description="Tele-phosphohistidine intermediate" evidence="1">
    <location>
        <position position="9"/>
    </location>
</feature>
<feature type="active site" description="Proton donor/acceptor" evidence="1">
    <location>
        <position position="87"/>
    </location>
</feature>
<feature type="binding site" evidence="1">
    <location>
        <begin position="8"/>
        <end position="15"/>
    </location>
    <ligand>
        <name>substrate</name>
    </ligand>
</feature>
<feature type="binding site" evidence="1">
    <location>
        <begin position="21"/>
        <end position="22"/>
    </location>
    <ligand>
        <name>substrate</name>
    </ligand>
</feature>
<feature type="binding site" evidence="1">
    <location>
        <position position="60"/>
    </location>
    <ligand>
        <name>substrate</name>
    </ligand>
</feature>
<feature type="binding site" evidence="1">
    <location>
        <begin position="87"/>
        <end position="90"/>
    </location>
    <ligand>
        <name>substrate</name>
    </ligand>
</feature>
<feature type="binding site" evidence="1">
    <location>
        <position position="98"/>
    </location>
    <ligand>
        <name>substrate</name>
    </ligand>
</feature>
<feature type="binding site" evidence="1">
    <location>
        <begin position="114"/>
        <end position="115"/>
    </location>
    <ligand>
        <name>substrate</name>
    </ligand>
</feature>
<feature type="binding site" evidence="1">
    <location>
        <begin position="183"/>
        <end position="184"/>
    </location>
    <ligand>
        <name>substrate</name>
    </ligand>
</feature>
<feature type="site" description="Transition state stabilizer" evidence="1">
    <location>
        <position position="182"/>
    </location>
</feature>
<protein>
    <recommendedName>
        <fullName evidence="1">2,3-bisphosphoglycerate-dependent phosphoglycerate mutase</fullName>
        <shortName evidence="1">BPG-dependent PGAM</shortName>
        <shortName evidence="1">PGAM</shortName>
        <shortName evidence="1">Phosphoglyceromutase</shortName>
        <shortName evidence="1">dPGM</shortName>
        <ecNumber evidence="1">5.4.2.11</ecNumber>
    </recommendedName>
</protein>
<name>GPMA_BORA1</name>
<proteinExistence type="inferred from homology"/>
<dbReference type="EC" id="5.4.2.11" evidence="1"/>
<dbReference type="EMBL" id="AM167904">
    <property type="protein sequence ID" value="CAJ47848.1"/>
    <property type="molecule type" value="Genomic_DNA"/>
</dbReference>
<dbReference type="RefSeq" id="WP_012415946.1">
    <property type="nucleotide sequence ID" value="NC_010645.1"/>
</dbReference>
<dbReference type="SMR" id="Q2L0A6"/>
<dbReference type="STRING" id="360910.BAV0243"/>
<dbReference type="GeneID" id="92936509"/>
<dbReference type="KEGG" id="bav:BAV0243"/>
<dbReference type="eggNOG" id="COG0588">
    <property type="taxonomic scope" value="Bacteria"/>
</dbReference>
<dbReference type="HOGENOM" id="CLU_033323_1_1_4"/>
<dbReference type="OrthoDB" id="9781415at2"/>
<dbReference type="UniPathway" id="UPA00109">
    <property type="reaction ID" value="UER00186"/>
</dbReference>
<dbReference type="Proteomes" id="UP000001977">
    <property type="component" value="Chromosome"/>
</dbReference>
<dbReference type="GO" id="GO:0004619">
    <property type="term" value="F:phosphoglycerate mutase activity"/>
    <property type="evidence" value="ECO:0007669"/>
    <property type="project" value="UniProtKB-EC"/>
</dbReference>
<dbReference type="GO" id="GO:0006094">
    <property type="term" value="P:gluconeogenesis"/>
    <property type="evidence" value="ECO:0007669"/>
    <property type="project" value="UniProtKB-UniRule"/>
</dbReference>
<dbReference type="GO" id="GO:0006096">
    <property type="term" value="P:glycolytic process"/>
    <property type="evidence" value="ECO:0007669"/>
    <property type="project" value="UniProtKB-UniRule"/>
</dbReference>
<dbReference type="CDD" id="cd07067">
    <property type="entry name" value="HP_PGM_like"/>
    <property type="match status" value="1"/>
</dbReference>
<dbReference type="FunFam" id="3.40.50.1240:FF:000003">
    <property type="entry name" value="2,3-bisphosphoglycerate-dependent phosphoglycerate mutase"/>
    <property type="match status" value="1"/>
</dbReference>
<dbReference type="Gene3D" id="3.40.50.1240">
    <property type="entry name" value="Phosphoglycerate mutase-like"/>
    <property type="match status" value="1"/>
</dbReference>
<dbReference type="HAMAP" id="MF_01039">
    <property type="entry name" value="PGAM_GpmA"/>
    <property type="match status" value="1"/>
</dbReference>
<dbReference type="InterPro" id="IPR013078">
    <property type="entry name" value="His_Pase_superF_clade-1"/>
</dbReference>
<dbReference type="InterPro" id="IPR029033">
    <property type="entry name" value="His_PPase_superfam"/>
</dbReference>
<dbReference type="InterPro" id="IPR001345">
    <property type="entry name" value="PG/BPGM_mutase_AS"/>
</dbReference>
<dbReference type="InterPro" id="IPR005952">
    <property type="entry name" value="Phosphogly_mut1"/>
</dbReference>
<dbReference type="NCBIfam" id="TIGR01258">
    <property type="entry name" value="pgm_1"/>
    <property type="match status" value="1"/>
</dbReference>
<dbReference type="NCBIfam" id="NF010713">
    <property type="entry name" value="PRK14115.1"/>
    <property type="match status" value="1"/>
</dbReference>
<dbReference type="PANTHER" id="PTHR11931">
    <property type="entry name" value="PHOSPHOGLYCERATE MUTASE"/>
    <property type="match status" value="1"/>
</dbReference>
<dbReference type="Pfam" id="PF00300">
    <property type="entry name" value="His_Phos_1"/>
    <property type="match status" value="2"/>
</dbReference>
<dbReference type="PIRSF" id="PIRSF000709">
    <property type="entry name" value="6PFK_2-Ptase"/>
    <property type="match status" value="1"/>
</dbReference>
<dbReference type="SMART" id="SM00855">
    <property type="entry name" value="PGAM"/>
    <property type="match status" value="1"/>
</dbReference>
<dbReference type="SUPFAM" id="SSF53254">
    <property type="entry name" value="Phosphoglycerate mutase-like"/>
    <property type="match status" value="1"/>
</dbReference>
<dbReference type="PROSITE" id="PS00175">
    <property type="entry name" value="PG_MUTASE"/>
    <property type="match status" value="1"/>
</dbReference>
<comment type="function">
    <text evidence="1">Catalyzes the interconversion of 2-phosphoglycerate and 3-phosphoglycerate.</text>
</comment>
<comment type="catalytic activity">
    <reaction evidence="1">
        <text>(2R)-2-phosphoglycerate = (2R)-3-phosphoglycerate</text>
        <dbReference type="Rhea" id="RHEA:15901"/>
        <dbReference type="ChEBI" id="CHEBI:58272"/>
        <dbReference type="ChEBI" id="CHEBI:58289"/>
        <dbReference type="EC" id="5.4.2.11"/>
    </reaction>
</comment>
<comment type="pathway">
    <text evidence="1">Carbohydrate degradation; glycolysis; pyruvate from D-glyceraldehyde 3-phosphate: step 3/5.</text>
</comment>
<comment type="subunit">
    <text evidence="1">Homodimer.</text>
</comment>
<comment type="similarity">
    <text evidence="1">Belongs to the phosphoglycerate mutase family. BPG-dependent PGAM subfamily.</text>
</comment>
<keyword id="KW-0312">Gluconeogenesis</keyword>
<keyword id="KW-0324">Glycolysis</keyword>
<keyword id="KW-0413">Isomerase</keyword>
<keyword id="KW-1185">Reference proteome</keyword>
<evidence type="ECO:0000255" key="1">
    <source>
        <dbReference type="HAMAP-Rule" id="MF_01039"/>
    </source>
</evidence>
<organism>
    <name type="scientific">Bordetella avium (strain 197N)</name>
    <dbReference type="NCBI Taxonomy" id="360910"/>
    <lineage>
        <taxon>Bacteria</taxon>
        <taxon>Pseudomonadati</taxon>
        <taxon>Pseudomonadota</taxon>
        <taxon>Betaproteobacteria</taxon>
        <taxon>Burkholderiales</taxon>
        <taxon>Alcaligenaceae</taxon>
        <taxon>Bordetella</taxon>
    </lineage>
</organism>